<organism>
    <name type="scientific">Sorangium cellulosum (strain So ce56)</name>
    <name type="common">Polyangium cellulosum (strain So ce56)</name>
    <dbReference type="NCBI Taxonomy" id="448385"/>
    <lineage>
        <taxon>Bacteria</taxon>
        <taxon>Pseudomonadati</taxon>
        <taxon>Myxococcota</taxon>
        <taxon>Polyangia</taxon>
        <taxon>Polyangiales</taxon>
        <taxon>Polyangiaceae</taxon>
        <taxon>Sorangium</taxon>
    </lineage>
</organism>
<name>NUON1_SORC5</name>
<accession>A9EX55</accession>
<gene>
    <name evidence="1" type="primary">nuoN1</name>
    <name type="ordered locus">sce4218</name>
</gene>
<proteinExistence type="inferred from homology"/>
<comment type="function">
    <text evidence="1">NDH-1 shuttles electrons from NADH, via FMN and iron-sulfur (Fe-S) centers, to quinones in the respiratory chain. The immediate electron acceptor for the enzyme in this species is believed to be ubiquinone. Couples the redox reaction to proton translocation (for every two electrons transferred, four hydrogen ions are translocated across the cytoplasmic membrane), and thus conserves the redox energy in a proton gradient.</text>
</comment>
<comment type="catalytic activity">
    <reaction evidence="1">
        <text>a quinone + NADH + 5 H(+)(in) = a quinol + NAD(+) + 4 H(+)(out)</text>
        <dbReference type="Rhea" id="RHEA:57888"/>
        <dbReference type="ChEBI" id="CHEBI:15378"/>
        <dbReference type="ChEBI" id="CHEBI:24646"/>
        <dbReference type="ChEBI" id="CHEBI:57540"/>
        <dbReference type="ChEBI" id="CHEBI:57945"/>
        <dbReference type="ChEBI" id="CHEBI:132124"/>
    </reaction>
</comment>
<comment type="subunit">
    <text evidence="1">NDH-1 is composed of 14 different subunits. Subunits NuoA, H, J, K, L, M, N constitute the membrane sector of the complex.</text>
</comment>
<comment type="subcellular location">
    <subcellularLocation>
        <location evidence="1">Cell inner membrane</location>
        <topology evidence="1">Multi-pass membrane protein</topology>
    </subcellularLocation>
</comment>
<comment type="similarity">
    <text evidence="1">Belongs to the complex I subunit 2 family.</text>
</comment>
<reference key="1">
    <citation type="journal article" date="2007" name="Nat. Biotechnol.">
        <title>Complete genome sequence of the myxobacterium Sorangium cellulosum.</title>
        <authorList>
            <person name="Schneiker S."/>
            <person name="Perlova O."/>
            <person name="Kaiser O."/>
            <person name="Gerth K."/>
            <person name="Alici A."/>
            <person name="Altmeyer M.O."/>
            <person name="Bartels D."/>
            <person name="Bekel T."/>
            <person name="Beyer S."/>
            <person name="Bode E."/>
            <person name="Bode H.B."/>
            <person name="Bolten C.J."/>
            <person name="Choudhuri J.V."/>
            <person name="Doss S."/>
            <person name="Elnakady Y.A."/>
            <person name="Frank B."/>
            <person name="Gaigalat L."/>
            <person name="Goesmann A."/>
            <person name="Groeger C."/>
            <person name="Gross F."/>
            <person name="Jelsbak L."/>
            <person name="Jelsbak L."/>
            <person name="Kalinowski J."/>
            <person name="Kegler C."/>
            <person name="Knauber T."/>
            <person name="Konietzny S."/>
            <person name="Kopp M."/>
            <person name="Krause L."/>
            <person name="Krug D."/>
            <person name="Linke B."/>
            <person name="Mahmud T."/>
            <person name="Martinez-Arias R."/>
            <person name="McHardy A.C."/>
            <person name="Merai M."/>
            <person name="Meyer F."/>
            <person name="Mormann S."/>
            <person name="Munoz-Dorado J."/>
            <person name="Perez J."/>
            <person name="Pradella S."/>
            <person name="Rachid S."/>
            <person name="Raddatz G."/>
            <person name="Rosenau F."/>
            <person name="Rueckert C."/>
            <person name="Sasse F."/>
            <person name="Scharfe M."/>
            <person name="Schuster S.C."/>
            <person name="Suen G."/>
            <person name="Treuner-Lange A."/>
            <person name="Velicer G.J."/>
            <person name="Vorholter F.-J."/>
            <person name="Weissman K.J."/>
            <person name="Welch R.D."/>
            <person name="Wenzel S.C."/>
            <person name="Whitworth D.E."/>
            <person name="Wilhelm S."/>
            <person name="Wittmann C."/>
            <person name="Bloecker H."/>
            <person name="Puehler A."/>
            <person name="Mueller R."/>
        </authorList>
    </citation>
    <scope>NUCLEOTIDE SEQUENCE [LARGE SCALE GENOMIC DNA]</scope>
    <source>
        <strain>So ce56</strain>
    </source>
</reference>
<protein>
    <recommendedName>
        <fullName evidence="1">NADH-quinone oxidoreductase subunit N 1</fullName>
        <ecNumber evidence="1">7.1.1.-</ecNumber>
    </recommendedName>
    <alternativeName>
        <fullName evidence="1">NADH dehydrogenase I subunit N 1</fullName>
    </alternativeName>
    <alternativeName>
        <fullName evidence="1">NDH-1 subunit N 1</fullName>
    </alternativeName>
</protein>
<keyword id="KW-0997">Cell inner membrane</keyword>
<keyword id="KW-1003">Cell membrane</keyword>
<keyword id="KW-0472">Membrane</keyword>
<keyword id="KW-0520">NAD</keyword>
<keyword id="KW-0874">Quinone</keyword>
<keyword id="KW-1185">Reference proteome</keyword>
<keyword id="KW-1278">Translocase</keyword>
<keyword id="KW-0812">Transmembrane</keyword>
<keyword id="KW-1133">Transmembrane helix</keyword>
<keyword id="KW-0813">Transport</keyword>
<keyword id="KW-0830">Ubiquinone</keyword>
<evidence type="ECO:0000255" key="1">
    <source>
        <dbReference type="HAMAP-Rule" id="MF_00445"/>
    </source>
</evidence>
<sequence>MILGPYIAVSPLIVISLGGALLMLAEAFSHRREESHDRRSGPSSDMALGTAITLLAGAVFSGAVGFVGPETLEGFDSLAPYLVMDRFTLFFSFVLCLGGALAALLAGGYLPEHRLDRGEFYPLLTFSTVGAIILAGAGDLLTLFLGLETMSLGAYALTGFRRTSPRSTEAAIKYFLLGSFAAALLLYGGALIYGATGHTDLAGIGEAIAGAKGAAAPNPALLLIGAALVLVGLAFKVSAVPFHMWTPDAYEGAPTPATTFMAVAVKGAAFATLLRVLLGAFGSPALSSWAAGWPPAVAVMALLTMTVANLIAGRQESVKRMLAYSSIAHAGYLLVGVAATVRASEDAQASVMFYLLAYTVSTVGAFGTLILCGSRGAEAVSYEDLSGIGKRHPVAALAFSLFLLSLAGVPPTAGFFGKLYIVKAAMGAELYTLSVALLLNSVLSAYYYLRVLVYMYMREPAPGAPIARPMRSGYVNAALVVSAVLVMVLGIWPTTSLGIAVRAVLASR</sequence>
<dbReference type="EC" id="7.1.1.-" evidence="1"/>
<dbReference type="EMBL" id="AM746676">
    <property type="protein sequence ID" value="CAN94381.1"/>
    <property type="molecule type" value="Genomic_DNA"/>
</dbReference>
<dbReference type="RefSeq" id="WP_012236851.1">
    <property type="nucleotide sequence ID" value="NC_010162.1"/>
</dbReference>
<dbReference type="SMR" id="A9EX55"/>
<dbReference type="STRING" id="448385.sce4218"/>
<dbReference type="KEGG" id="scl:sce4218"/>
<dbReference type="eggNOG" id="COG1007">
    <property type="taxonomic scope" value="Bacteria"/>
</dbReference>
<dbReference type="HOGENOM" id="CLU_007100_1_5_7"/>
<dbReference type="OrthoDB" id="9805769at2"/>
<dbReference type="BioCyc" id="SCEL448385:SCE_RS21675-MONOMER"/>
<dbReference type="Proteomes" id="UP000002139">
    <property type="component" value="Chromosome"/>
</dbReference>
<dbReference type="GO" id="GO:0005886">
    <property type="term" value="C:plasma membrane"/>
    <property type="evidence" value="ECO:0007669"/>
    <property type="project" value="UniProtKB-SubCell"/>
</dbReference>
<dbReference type="GO" id="GO:0008137">
    <property type="term" value="F:NADH dehydrogenase (ubiquinone) activity"/>
    <property type="evidence" value="ECO:0007669"/>
    <property type="project" value="InterPro"/>
</dbReference>
<dbReference type="GO" id="GO:0050136">
    <property type="term" value="F:NADH:ubiquinone reductase (non-electrogenic) activity"/>
    <property type="evidence" value="ECO:0007669"/>
    <property type="project" value="UniProtKB-UniRule"/>
</dbReference>
<dbReference type="GO" id="GO:0048038">
    <property type="term" value="F:quinone binding"/>
    <property type="evidence" value="ECO:0007669"/>
    <property type="project" value="UniProtKB-KW"/>
</dbReference>
<dbReference type="GO" id="GO:0042773">
    <property type="term" value="P:ATP synthesis coupled electron transport"/>
    <property type="evidence" value="ECO:0007669"/>
    <property type="project" value="InterPro"/>
</dbReference>
<dbReference type="HAMAP" id="MF_00445">
    <property type="entry name" value="NDH1_NuoN_1"/>
    <property type="match status" value="1"/>
</dbReference>
<dbReference type="InterPro" id="IPR010096">
    <property type="entry name" value="NADH-Q_OxRdtase_suN/2"/>
</dbReference>
<dbReference type="InterPro" id="IPR001750">
    <property type="entry name" value="ND/Mrp_TM"/>
</dbReference>
<dbReference type="NCBIfam" id="TIGR01770">
    <property type="entry name" value="NDH_I_N"/>
    <property type="match status" value="1"/>
</dbReference>
<dbReference type="PANTHER" id="PTHR22773">
    <property type="entry name" value="NADH DEHYDROGENASE"/>
    <property type="match status" value="1"/>
</dbReference>
<dbReference type="Pfam" id="PF00361">
    <property type="entry name" value="Proton_antipo_M"/>
    <property type="match status" value="1"/>
</dbReference>
<dbReference type="PRINTS" id="PR01434">
    <property type="entry name" value="NADHDHGNASE5"/>
</dbReference>
<feature type="chain" id="PRO_0000391226" description="NADH-quinone oxidoreductase subunit N 1">
    <location>
        <begin position="1"/>
        <end position="508"/>
    </location>
</feature>
<feature type="transmembrane region" description="Helical" evidence="1">
    <location>
        <begin position="2"/>
        <end position="22"/>
    </location>
</feature>
<feature type="transmembrane region" description="Helical" evidence="1">
    <location>
        <begin position="47"/>
        <end position="67"/>
    </location>
</feature>
<feature type="transmembrane region" description="Helical" evidence="1">
    <location>
        <begin position="87"/>
        <end position="107"/>
    </location>
</feature>
<feature type="transmembrane region" description="Helical" evidence="1">
    <location>
        <begin position="126"/>
        <end position="146"/>
    </location>
</feature>
<feature type="transmembrane region" description="Helical" evidence="1">
    <location>
        <begin position="175"/>
        <end position="195"/>
    </location>
</feature>
<feature type="transmembrane region" description="Helical" evidence="1">
    <location>
        <begin position="220"/>
        <end position="240"/>
    </location>
</feature>
<feature type="transmembrane region" description="Helical" evidence="1">
    <location>
        <begin position="260"/>
        <end position="280"/>
    </location>
</feature>
<feature type="transmembrane region" description="Helical" evidence="1">
    <location>
        <begin position="291"/>
        <end position="311"/>
    </location>
</feature>
<feature type="transmembrane region" description="Helical" evidence="1">
    <location>
        <begin position="321"/>
        <end position="341"/>
    </location>
</feature>
<feature type="transmembrane region" description="Helical" evidence="1">
    <location>
        <begin position="351"/>
        <end position="371"/>
    </location>
</feature>
<feature type="transmembrane region" description="Helical" evidence="1">
    <location>
        <begin position="396"/>
        <end position="416"/>
    </location>
</feature>
<feature type="transmembrane region" description="Helical" evidence="1">
    <location>
        <begin position="431"/>
        <end position="453"/>
    </location>
</feature>
<feature type="transmembrane region" description="Helical" evidence="1">
    <location>
        <begin position="479"/>
        <end position="499"/>
    </location>
</feature>